<reference key="1">
    <citation type="journal article" date="2008" name="J. Bacteriol.">
        <title>Comparative genome sequence analysis of multidrug-resistant Acinetobacter baumannii.</title>
        <authorList>
            <person name="Adams M.D."/>
            <person name="Goglin K."/>
            <person name="Molyneaux N."/>
            <person name="Hujer K.M."/>
            <person name="Lavender H."/>
            <person name="Jamison J.J."/>
            <person name="MacDonald I.J."/>
            <person name="Martin K.M."/>
            <person name="Russo T."/>
            <person name="Campagnari A.A."/>
            <person name="Hujer A.M."/>
            <person name="Bonomo R.A."/>
            <person name="Gill S.R."/>
        </authorList>
    </citation>
    <scope>NUCLEOTIDE SEQUENCE [LARGE SCALE GENOMIC DNA]</scope>
    <source>
        <strain>AB307-0294</strain>
    </source>
</reference>
<evidence type="ECO:0000255" key="1">
    <source>
        <dbReference type="HAMAP-Rule" id="MF_00009"/>
    </source>
</evidence>
<gene>
    <name evidence="1" type="primary">ybeY</name>
    <name type="ordered locus">ABBFA_000487</name>
</gene>
<dbReference type="EC" id="3.1.-.-" evidence="1"/>
<dbReference type="EMBL" id="CP001172">
    <property type="protein sequence ID" value="ACJ59300.1"/>
    <property type="molecule type" value="Genomic_DNA"/>
</dbReference>
<dbReference type="RefSeq" id="WP_000703572.1">
    <property type="nucleotide sequence ID" value="NZ_CP001172.1"/>
</dbReference>
<dbReference type="SMR" id="B7GW53"/>
<dbReference type="HOGENOM" id="CLU_106710_0_1_6"/>
<dbReference type="Proteomes" id="UP000006924">
    <property type="component" value="Chromosome"/>
</dbReference>
<dbReference type="GO" id="GO:0005737">
    <property type="term" value="C:cytoplasm"/>
    <property type="evidence" value="ECO:0007669"/>
    <property type="project" value="UniProtKB-SubCell"/>
</dbReference>
<dbReference type="GO" id="GO:0004222">
    <property type="term" value="F:metalloendopeptidase activity"/>
    <property type="evidence" value="ECO:0007669"/>
    <property type="project" value="InterPro"/>
</dbReference>
<dbReference type="GO" id="GO:0004521">
    <property type="term" value="F:RNA endonuclease activity"/>
    <property type="evidence" value="ECO:0007669"/>
    <property type="project" value="UniProtKB-UniRule"/>
</dbReference>
<dbReference type="GO" id="GO:0008270">
    <property type="term" value="F:zinc ion binding"/>
    <property type="evidence" value="ECO:0007669"/>
    <property type="project" value="UniProtKB-UniRule"/>
</dbReference>
<dbReference type="GO" id="GO:0006364">
    <property type="term" value="P:rRNA processing"/>
    <property type="evidence" value="ECO:0007669"/>
    <property type="project" value="UniProtKB-UniRule"/>
</dbReference>
<dbReference type="Gene3D" id="3.40.390.30">
    <property type="entry name" value="Metalloproteases ('zincins'), catalytic domain"/>
    <property type="match status" value="1"/>
</dbReference>
<dbReference type="HAMAP" id="MF_00009">
    <property type="entry name" value="Endoribonucl_YbeY"/>
    <property type="match status" value="1"/>
</dbReference>
<dbReference type="InterPro" id="IPR023091">
    <property type="entry name" value="MetalPrtase_cat_dom_sf_prd"/>
</dbReference>
<dbReference type="InterPro" id="IPR002036">
    <property type="entry name" value="YbeY"/>
</dbReference>
<dbReference type="InterPro" id="IPR020549">
    <property type="entry name" value="YbeY_CS"/>
</dbReference>
<dbReference type="NCBIfam" id="TIGR00043">
    <property type="entry name" value="rRNA maturation RNase YbeY"/>
    <property type="match status" value="1"/>
</dbReference>
<dbReference type="PANTHER" id="PTHR46986">
    <property type="entry name" value="ENDORIBONUCLEASE YBEY, CHLOROPLASTIC"/>
    <property type="match status" value="1"/>
</dbReference>
<dbReference type="PANTHER" id="PTHR46986:SF1">
    <property type="entry name" value="ENDORIBONUCLEASE YBEY, CHLOROPLASTIC"/>
    <property type="match status" value="1"/>
</dbReference>
<dbReference type="Pfam" id="PF02130">
    <property type="entry name" value="YbeY"/>
    <property type="match status" value="1"/>
</dbReference>
<dbReference type="SUPFAM" id="SSF55486">
    <property type="entry name" value="Metalloproteases ('zincins'), catalytic domain"/>
    <property type="match status" value="1"/>
</dbReference>
<dbReference type="PROSITE" id="PS01306">
    <property type="entry name" value="UPF0054"/>
    <property type="match status" value="1"/>
</dbReference>
<name>YBEY_ACIB3</name>
<sequence>MKISLSLQQDFRSPELELKRAQLKKIIETTLRHVGYKEDCEIGIACVDLEESHQLNLQYREKDKPTNVLSFPSDIPEEVLPMLDALPLGDLVICIPVVLQEALEQKKTAQNHFAHLLVHGVLHLLGYDHETSDEDAEEMEGLEIEILAKLNIANPYQE</sequence>
<protein>
    <recommendedName>
        <fullName evidence="1">Endoribonuclease YbeY</fullName>
        <ecNumber evidence="1">3.1.-.-</ecNumber>
    </recommendedName>
</protein>
<comment type="function">
    <text evidence="1">Single strand-specific metallo-endoribonuclease involved in late-stage 70S ribosome quality control and in maturation of the 3' terminus of the 16S rRNA.</text>
</comment>
<comment type="cofactor">
    <cofactor evidence="1">
        <name>Zn(2+)</name>
        <dbReference type="ChEBI" id="CHEBI:29105"/>
    </cofactor>
    <text evidence="1">Binds 1 zinc ion.</text>
</comment>
<comment type="subcellular location">
    <subcellularLocation>
        <location evidence="1">Cytoplasm</location>
    </subcellularLocation>
</comment>
<comment type="similarity">
    <text evidence="1">Belongs to the endoribonuclease YbeY family.</text>
</comment>
<keyword id="KW-0963">Cytoplasm</keyword>
<keyword id="KW-0255">Endonuclease</keyword>
<keyword id="KW-0378">Hydrolase</keyword>
<keyword id="KW-0479">Metal-binding</keyword>
<keyword id="KW-0540">Nuclease</keyword>
<keyword id="KW-0690">Ribosome biogenesis</keyword>
<keyword id="KW-0698">rRNA processing</keyword>
<keyword id="KW-0862">Zinc</keyword>
<accession>B7GW53</accession>
<organism>
    <name type="scientific">Acinetobacter baumannii (strain AB307-0294)</name>
    <dbReference type="NCBI Taxonomy" id="557600"/>
    <lineage>
        <taxon>Bacteria</taxon>
        <taxon>Pseudomonadati</taxon>
        <taxon>Pseudomonadota</taxon>
        <taxon>Gammaproteobacteria</taxon>
        <taxon>Moraxellales</taxon>
        <taxon>Moraxellaceae</taxon>
        <taxon>Acinetobacter</taxon>
        <taxon>Acinetobacter calcoaceticus/baumannii complex</taxon>
    </lineage>
</organism>
<feature type="chain" id="PRO_1000199941" description="Endoribonuclease YbeY">
    <location>
        <begin position="1"/>
        <end position="158"/>
    </location>
</feature>
<feature type="binding site" evidence="1">
    <location>
        <position position="119"/>
    </location>
    <ligand>
        <name>Zn(2+)</name>
        <dbReference type="ChEBI" id="CHEBI:29105"/>
        <note>catalytic</note>
    </ligand>
</feature>
<feature type="binding site" evidence="1">
    <location>
        <position position="123"/>
    </location>
    <ligand>
        <name>Zn(2+)</name>
        <dbReference type="ChEBI" id="CHEBI:29105"/>
        <note>catalytic</note>
    </ligand>
</feature>
<feature type="binding site" evidence="1">
    <location>
        <position position="129"/>
    </location>
    <ligand>
        <name>Zn(2+)</name>
        <dbReference type="ChEBI" id="CHEBI:29105"/>
        <note>catalytic</note>
    </ligand>
</feature>
<proteinExistence type="inferred from homology"/>